<evidence type="ECO:0000255" key="1">
    <source>
        <dbReference type="HAMAP-Rule" id="MF_00463"/>
    </source>
</evidence>
<dbReference type="EC" id="7.-.-.-" evidence="1"/>
<dbReference type="EMBL" id="CP000446">
    <property type="protein sequence ID" value="ABI39138.1"/>
    <property type="molecule type" value="Genomic_DNA"/>
</dbReference>
<dbReference type="RefSeq" id="WP_011622828.1">
    <property type="nucleotide sequence ID" value="NC_008321.1"/>
</dbReference>
<dbReference type="KEGG" id="she:Shewmr4_2065"/>
<dbReference type="HOGENOM" id="CLU_063448_2_0_6"/>
<dbReference type="GO" id="GO:0005886">
    <property type="term" value="C:plasma membrane"/>
    <property type="evidence" value="ECO:0007669"/>
    <property type="project" value="UniProtKB-SubCell"/>
</dbReference>
<dbReference type="GO" id="GO:0051539">
    <property type="term" value="F:4 iron, 4 sulfur cluster binding"/>
    <property type="evidence" value="ECO:0007669"/>
    <property type="project" value="UniProtKB-UniRule"/>
</dbReference>
<dbReference type="GO" id="GO:0009055">
    <property type="term" value="F:electron transfer activity"/>
    <property type="evidence" value="ECO:0007669"/>
    <property type="project" value="InterPro"/>
</dbReference>
<dbReference type="GO" id="GO:0046872">
    <property type="term" value="F:metal ion binding"/>
    <property type="evidence" value="ECO:0007669"/>
    <property type="project" value="UniProtKB-KW"/>
</dbReference>
<dbReference type="GO" id="GO:0022900">
    <property type="term" value="P:electron transport chain"/>
    <property type="evidence" value="ECO:0007669"/>
    <property type="project" value="UniProtKB-UniRule"/>
</dbReference>
<dbReference type="FunFam" id="1.10.15.40:FF:000001">
    <property type="entry name" value="Ion-translocating oxidoreductase complex subunit B"/>
    <property type="match status" value="1"/>
</dbReference>
<dbReference type="Gene3D" id="3.30.70.20">
    <property type="match status" value="2"/>
</dbReference>
<dbReference type="Gene3D" id="1.10.15.40">
    <property type="entry name" value="Electron transport complex subunit B, putative Fe-S cluster"/>
    <property type="match status" value="1"/>
</dbReference>
<dbReference type="HAMAP" id="MF_00463">
    <property type="entry name" value="RsxB_RnfB"/>
    <property type="match status" value="1"/>
</dbReference>
<dbReference type="InterPro" id="IPR007202">
    <property type="entry name" value="4Fe-4S_dom"/>
</dbReference>
<dbReference type="InterPro" id="IPR017896">
    <property type="entry name" value="4Fe4S_Fe-S-bd"/>
</dbReference>
<dbReference type="InterPro" id="IPR017900">
    <property type="entry name" value="4Fe4S_Fe_S_CS"/>
</dbReference>
<dbReference type="InterPro" id="IPR010207">
    <property type="entry name" value="Elect_transpt_cplx_RnfB/RsxB"/>
</dbReference>
<dbReference type="InterPro" id="IPR016463">
    <property type="entry name" value="RnfB/RsxB_Proteobac"/>
</dbReference>
<dbReference type="InterPro" id="IPR050294">
    <property type="entry name" value="RnfB_subfamily"/>
</dbReference>
<dbReference type="NCBIfam" id="NF003475">
    <property type="entry name" value="PRK05113.1"/>
    <property type="match status" value="1"/>
</dbReference>
<dbReference type="NCBIfam" id="TIGR01944">
    <property type="entry name" value="rnfB"/>
    <property type="match status" value="1"/>
</dbReference>
<dbReference type="PANTHER" id="PTHR42859:SF3">
    <property type="entry name" value="ION-TRANSLOCATING OXIDOREDUCTASE COMPLEX SUBUNIT B"/>
    <property type="match status" value="1"/>
</dbReference>
<dbReference type="PANTHER" id="PTHR42859">
    <property type="entry name" value="OXIDOREDUCTASE"/>
    <property type="match status" value="1"/>
</dbReference>
<dbReference type="Pfam" id="PF14697">
    <property type="entry name" value="Fer4_21"/>
    <property type="match status" value="1"/>
</dbReference>
<dbReference type="Pfam" id="PF04060">
    <property type="entry name" value="FeS"/>
    <property type="match status" value="1"/>
</dbReference>
<dbReference type="PIRSF" id="PIRSF005784">
    <property type="entry name" value="Elect_transpt_RnfB"/>
    <property type="match status" value="1"/>
</dbReference>
<dbReference type="SUPFAM" id="SSF54862">
    <property type="entry name" value="4Fe-4S ferredoxins"/>
    <property type="match status" value="1"/>
</dbReference>
<dbReference type="PROSITE" id="PS51656">
    <property type="entry name" value="4FE4S"/>
    <property type="match status" value="1"/>
</dbReference>
<dbReference type="PROSITE" id="PS00198">
    <property type="entry name" value="4FE4S_FER_1"/>
    <property type="match status" value="2"/>
</dbReference>
<dbReference type="PROSITE" id="PS51379">
    <property type="entry name" value="4FE4S_FER_2"/>
    <property type="match status" value="2"/>
</dbReference>
<comment type="function">
    <text evidence="1">Part of a membrane-bound complex that couples electron transfer with translocation of ions across the membrane.</text>
</comment>
<comment type="cofactor">
    <cofactor evidence="1">
        <name>[4Fe-4S] cluster</name>
        <dbReference type="ChEBI" id="CHEBI:49883"/>
    </cofactor>
    <text evidence="1">Binds 3 [4Fe-4S] clusters.</text>
</comment>
<comment type="subunit">
    <text evidence="1">The complex is composed of six subunits: RnfA, RnfB, RnfC, RnfD, RnfE and RnfG.</text>
</comment>
<comment type="subcellular location">
    <subcellularLocation>
        <location evidence="1">Cell inner membrane</location>
    </subcellularLocation>
</comment>
<comment type="similarity">
    <text evidence="1">Belongs to the 4Fe4S bacterial-type ferredoxin family. RnfB subfamily.</text>
</comment>
<proteinExistence type="inferred from homology"/>
<accession>Q0HIH9</accession>
<reference key="1">
    <citation type="submission" date="2006-08" db="EMBL/GenBank/DDBJ databases">
        <title>Complete sequence of Shewanella sp. MR-4.</title>
        <authorList>
            <consortium name="US DOE Joint Genome Institute"/>
            <person name="Copeland A."/>
            <person name="Lucas S."/>
            <person name="Lapidus A."/>
            <person name="Barry K."/>
            <person name="Detter J.C."/>
            <person name="Glavina del Rio T."/>
            <person name="Hammon N."/>
            <person name="Israni S."/>
            <person name="Dalin E."/>
            <person name="Tice H."/>
            <person name="Pitluck S."/>
            <person name="Kiss H."/>
            <person name="Brettin T."/>
            <person name="Bruce D."/>
            <person name="Han C."/>
            <person name="Tapia R."/>
            <person name="Gilna P."/>
            <person name="Schmutz J."/>
            <person name="Larimer F."/>
            <person name="Land M."/>
            <person name="Hauser L."/>
            <person name="Kyrpides N."/>
            <person name="Mikhailova N."/>
            <person name="Nealson K."/>
            <person name="Konstantinidis K."/>
            <person name="Klappenbach J."/>
            <person name="Tiedje J."/>
            <person name="Richardson P."/>
        </authorList>
    </citation>
    <scope>NUCLEOTIDE SEQUENCE [LARGE SCALE GENOMIC DNA]</scope>
    <source>
        <strain>MR-4</strain>
    </source>
</reference>
<organism>
    <name type="scientific">Shewanella sp. (strain MR-4)</name>
    <dbReference type="NCBI Taxonomy" id="60480"/>
    <lineage>
        <taxon>Bacteria</taxon>
        <taxon>Pseudomonadati</taxon>
        <taxon>Pseudomonadota</taxon>
        <taxon>Gammaproteobacteria</taxon>
        <taxon>Alteromonadales</taxon>
        <taxon>Shewanellaceae</taxon>
        <taxon>Shewanella</taxon>
    </lineage>
</organism>
<keyword id="KW-0004">4Fe-4S</keyword>
<keyword id="KW-0997">Cell inner membrane</keyword>
<keyword id="KW-1003">Cell membrane</keyword>
<keyword id="KW-0249">Electron transport</keyword>
<keyword id="KW-0408">Iron</keyword>
<keyword id="KW-0411">Iron-sulfur</keyword>
<keyword id="KW-0472">Membrane</keyword>
<keyword id="KW-0479">Metal-binding</keyword>
<keyword id="KW-0677">Repeat</keyword>
<keyword id="KW-1278">Translocase</keyword>
<keyword id="KW-0813">Transport</keyword>
<name>RNFB_SHESM</name>
<protein>
    <recommendedName>
        <fullName evidence="1">Ion-translocating oxidoreductase complex subunit B</fullName>
        <ecNumber evidence="1">7.-.-.-</ecNumber>
    </recommendedName>
    <alternativeName>
        <fullName evidence="1">Rnf electron transport complex subunit B</fullName>
    </alternativeName>
</protein>
<sequence>MSTMLIAVILLTLLALFFGVLLGFAALKFKVEGNPIVDELEAILPQTQCGQCGYPGCRPYAEAIANGDKVNKCPPGGTATMEKLASLMGVEPEPLNAEAQSQVKKVAYIREDECIGCTKCIQACPVDAIIGAGKLMHTVLTADCTGCDLCVEPCPVDCIDMLPVGQNLKNWNWRLNAIPVTLIQETPHEEKRG</sequence>
<feature type="chain" id="PRO_1000013656" description="Ion-translocating oxidoreductase complex subunit B">
    <location>
        <begin position="1"/>
        <end position="193"/>
    </location>
</feature>
<feature type="domain" description="4Fe-4S" evidence="1">
    <location>
        <begin position="32"/>
        <end position="90"/>
    </location>
</feature>
<feature type="domain" description="4Fe-4S ferredoxin-type 1" evidence="1">
    <location>
        <begin position="105"/>
        <end position="134"/>
    </location>
</feature>
<feature type="domain" description="4Fe-4S ferredoxin-type 2" evidence="1">
    <location>
        <begin position="136"/>
        <end position="164"/>
    </location>
</feature>
<feature type="region of interest" description="Hydrophobic" evidence="1">
    <location>
        <begin position="1"/>
        <end position="26"/>
    </location>
</feature>
<feature type="binding site" evidence="1">
    <location>
        <position position="49"/>
    </location>
    <ligand>
        <name>[4Fe-4S] cluster</name>
        <dbReference type="ChEBI" id="CHEBI:49883"/>
        <label>1</label>
    </ligand>
</feature>
<feature type="binding site" evidence="1">
    <location>
        <position position="52"/>
    </location>
    <ligand>
        <name>[4Fe-4S] cluster</name>
        <dbReference type="ChEBI" id="CHEBI:49883"/>
        <label>1</label>
    </ligand>
</feature>
<feature type="binding site" evidence="1">
    <location>
        <position position="57"/>
    </location>
    <ligand>
        <name>[4Fe-4S] cluster</name>
        <dbReference type="ChEBI" id="CHEBI:49883"/>
        <label>1</label>
    </ligand>
</feature>
<feature type="binding site" evidence="1">
    <location>
        <position position="73"/>
    </location>
    <ligand>
        <name>[4Fe-4S] cluster</name>
        <dbReference type="ChEBI" id="CHEBI:49883"/>
        <label>1</label>
    </ligand>
</feature>
<feature type="binding site" evidence="1">
    <location>
        <position position="114"/>
    </location>
    <ligand>
        <name>[4Fe-4S] cluster</name>
        <dbReference type="ChEBI" id="CHEBI:49883"/>
        <label>2</label>
    </ligand>
</feature>
<feature type="binding site" evidence="1">
    <location>
        <position position="117"/>
    </location>
    <ligand>
        <name>[4Fe-4S] cluster</name>
        <dbReference type="ChEBI" id="CHEBI:49883"/>
        <label>2</label>
    </ligand>
</feature>
<feature type="binding site" evidence="1">
    <location>
        <position position="120"/>
    </location>
    <ligand>
        <name>[4Fe-4S] cluster</name>
        <dbReference type="ChEBI" id="CHEBI:49883"/>
        <label>2</label>
    </ligand>
</feature>
<feature type="binding site" evidence="1">
    <location>
        <position position="124"/>
    </location>
    <ligand>
        <name>[4Fe-4S] cluster</name>
        <dbReference type="ChEBI" id="CHEBI:49883"/>
        <label>3</label>
    </ligand>
</feature>
<feature type="binding site" evidence="1">
    <location>
        <position position="144"/>
    </location>
    <ligand>
        <name>[4Fe-4S] cluster</name>
        <dbReference type="ChEBI" id="CHEBI:49883"/>
        <label>3</label>
    </ligand>
</feature>
<feature type="binding site" evidence="1">
    <location>
        <position position="147"/>
    </location>
    <ligand>
        <name>[4Fe-4S] cluster</name>
        <dbReference type="ChEBI" id="CHEBI:49883"/>
        <label>3</label>
    </ligand>
</feature>
<feature type="binding site" evidence="1">
    <location>
        <position position="150"/>
    </location>
    <ligand>
        <name>[4Fe-4S] cluster</name>
        <dbReference type="ChEBI" id="CHEBI:49883"/>
        <label>3</label>
    </ligand>
</feature>
<feature type="binding site" evidence="1">
    <location>
        <position position="154"/>
    </location>
    <ligand>
        <name>[4Fe-4S] cluster</name>
        <dbReference type="ChEBI" id="CHEBI:49883"/>
        <label>2</label>
    </ligand>
</feature>
<gene>
    <name evidence="1" type="primary">rnfB</name>
    <name type="ordered locus">Shewmr4_2065</name>
</gene>